<gene>
    <name type="ordered locus">Rv3421c</name>
    <name type="ORF">MTCY78.08</name>
</gene>
<keyword id="KW-1185">Reference proteome</keyword>
<keyword id="KW-0732">Signal</keyword>
<name>Y3421_MYCTU</name>
<proteinExistence type="evidence at protein level"/>
<feature type="signal peptide" evidence="1">
    <location>
        <begin position="1"/>
        <end position="20"/>
    </location>
</feature>
<feature type="chain" id="PRO_0000014153" description="Uncharacterized protein Rv3421c">
    <location>
        <begin position="21"/>
        <end position="211"/>
    </location>
</feature>
<organism>
    <name type="scientific">Mycobacterium tuberculosis (strain ATCC 25618 / H37Rv)</name>
    <dbReference type="NCBI Taxonomy" id="83332"/>
    <lineage>
        <taxon>Bacteria</taxon>
        <taxon>Bacillati</taxon>
        <taxon>Actinomycetota</taxon>
        <taxon>Actinomycetes</taxon>
        <taxon>Mycobacteriales</taxon>
        <taxon>Mycobacteriaceae</taxon>
        <taxon>Mycobacterium</taxon>
        <taxon>Mycobacterium tuberculosis complex</taxon>
    </lineage>
</organism>
<protein>
    <recommendedName>
        <fullName>Uncharacterized protein Rv3421c</fullName>
    </recommendedName>
</protein>
<evidence type="ECO:0000255" key="1"/>
<evidence type="ECO:0000305" key="2"/>
<sequence length="211" mass="21572">MSRVQISTVLAIDTATPAVTAGIVRRHDLVVLGERVTVDARAHAERLTPNVLAALADAALTMADLDAVVVGCGPGPFTGLRAGMASAAAYGHALGIPVYGVCSLDAIGGQTIGDTLVVTDARRREVYWARYCDGIRTVGPAVNAAADVDPGPALAVAGAPEHAALFALPCVEPSRPSPAGLVAAVNWADKPAPLVPLYLRRPDAKPLAVCT</sequence>
<accession>P9WKY7</accession>
<accession>L0TCH3</accession>
<accession>P65083</accession>
<accession>Q50707</accession>
<dbReference type="EMBL" id="AL123456">
    <property type="protein sequence ID" value="CCP46243.1"/>
    <property type="molecule type" value="Genomic_DNA"/>
</dbReference>
<dbReference type="PIR" id="B70738">
    <property type="entry name" value="B70738"/>
</dbReference>
<dbReference type="RefSeq" id="NP_217938.1">
    <property type="nucleotide sequence ID" value="NC_000962.3"/>
</dbReference>
<dbReference type="SMR" id="P9WKY7"/>
<dbReference type="FunCoup" id="P9WKY7">
    <property type="interactions" value="71"/>
</dbReference>
<dbReference type="STRING" id="83332.Rv3421c"/>
<dbReference type="PaxDb" id="83332-Rv3421c"/>
<dbReference type="DNASU" id="887532"/>
<dbReference type="GeneID" id="887532"/>
<dbReference type="KEGG" id="mtu:Rv3421c"/>
<dbReference type="KEGG" id="mtv:RVBD_3421c"/>
<dbReference type="PATRIC" id="fig|83332.111.peg.3811"/>
<dbReference type="TubercuList" id="Rv3421c"/>
<dbReference type="eggNOG" id="COG1214">
    <property type="taxonomic scope" value="Bacteria"/>
</dbReference>
<dbReference type="InParanoid" id="P9WKY7"/>
<dbReference type="OrthoDB" id="9809995at2"/>
<dbReference type="PhylomeDB" id="P9WKY7"/>
<dbReference type="Proteomes" id="UP000001584">
    <property type="component" value="Chromosome"/>
</dbReference>
<dbReference type="GO" id="GO:0005829">
    <property type="term" value="C:cytosol"/>
    <property type="evidence" value="ECO:0000318"/>
    <property type="project" value="GO_Central"/>
</dbReference>
<dbReference type="GO" id="GO:0009274">
    <property type="term" value="C:peptidoglycan-based cell wall"/>
    <property type="evidence" value="ECO:0007005"/>
    <property type="project" value="MTBBASE"/>
</dbReference>
<dbReference type="GO" id="GO:0002949">
    <property type="term" value="P:tRNA threonylcarbamoyladenosine modification"/>
    <property type="evidence" value="ECO:0007669"/>
    <property type="project" value="InterPro"/>
</dbReference>
<dbReference type="CDD" id="cd24032">
    <property type="entry name" value="ASKHA_NBD_TsaB"/>
    <property type="match status" value="1"/>
</dbReference>
<dbReference type="Gene3D" id="3.30.420.40">
    <property type="match status" value="1"/>
</dbReference>
<dbReference type="InterPro" id="IPR043129">
    <property type="entry name" value="ATPase_NBD"/>
</dbReference>
<dbReference type="InterPro" id="IPR000905">
    <property type="entry name" value="Gcp-like_dom"/>
</dbReference>
<dbReference type="InterPro" id="IPR022496">
    <property type="entry name" value="T6A_TsaB"/>
</dbReference>
<dbReference type="NCBIfam" id="TIGR03725">
    <property type="entry name" value="T6A_YeaZ"/>
    <property type="match status" value="1"/>
</dbReference>
<dbReference type="PANTHER" id="PTHR11735">
    <property type="entry name" value="TRNA N6-ADENOSINE THREONYLCARBAMOYLTRANSFERASE"/>
    <property type="match status" value="1"/>
</dbReference>
<dbReference type="PANTHER" id="PTHR11735:SF11">
    <property type="entry name" value="TRNA THREONYLCARBAMOYLADENOSINE BIOSYNTHESIS PROTEIN TSAB"/>
    <property type="match status" value="1"/>
</dbReference>
<dbReference type="Pfam" id="PF00814">
    <property type="entry name" value="TsaD"/>
    <property type="match status" value="1"/>
</dbReference>
<dbReference type="SUPFAM" id="SSF53067">
    <property type="entry name" value="Actin-like ATPase domain"/>
    <property type="match status" value="2"/>
</dbReference>
<reference key="1">
    <citation type="journal article" date="1998" name="Nature">
        <title>Deciphering the biology of Mycobacterium tuberculosis from the complete genome sequence.</title>
        <authorList>
            <person name="Cole S.T."/>
            <person name="Brosch R."/>
            <person name="Parkhill J."/>
            <person name="Garnier T."/>
            <person name="Churcher C.M."/>
            <person name="Harris D.E."/>
            <person name="Gordon S.V."/>
            <person name="Eiglmeier K."/>
            <person name="Gas S."/>
            <person name="Barry C.E. III"/>
            <person name="Tekaia F."/>
            <person name="Badcock K."/>
            <person name="Basham D."/>
            <person name="Brown D."/>
            <person name="Chillingworth T."/>
            <person name="Connor R."/>
            <person name="Davies R.M."/>
            <person name="Devlin K."/>
            <person name="Feltwell T."/>
            <person name="Gentles S."/>
            <person name="Hamlin N."/>
            <person name="Holroyd S."/>
            <person name="Hornsby T."/>
            <person name="Jagels K."/>
            <person name="Krogh A."/>
            <person name="McLean J."/>
            <person name="Moule S."/>
            <person name="Murphy L.D."/>
            <person name="Oliver S."/>
            <person name="Osborne J."/>
            <person name="Quail M.A."/>
            <person name="Rajandream M.A."/>
            <person name="Rogers J."/>
            <person name="Rutter S."/>
            <person name="Seeger K."/>
            <person name="Skelton S."/>
            <person name="Squares S."/>
            <person name="Squares R."/>
            <person name="Sulston J.E."/>
            <person name="Taylor K."/>
            <person name="Whitehead S."/>
            <person name="Barrell B.G."/>
        </authorList>
    </citation>
    <scope>NUCLEOTIDE SEQUENCE [LARGE SCALE GENOMIC DNA]</scope>
    <source>
        <strain>ATCC 25618 / H37Rv</strain>
    </source>
</reference>
<reference key="2">
    <citation type="journal article" date="2011" name="Mol. Cell. Proteomics">
        <title>Proteogenomic analysis of Mycobacterium tuberculosis by high resolution mass spectrometry.</title>
        <authorList>
            <person name="Kelkar D.S."/>
            <person name="Kumar D."/>
            <person name="Kumar P."/>
            <person name="Balakrishnan L."/>
            <person name="Muthusamy B."/>
            <person name="Yadav A.K."/>
            <person name="Shrivastava P."/>
            <person name="Marimuthu A."/>
            <person name="Anand S."/>
            <person name="Sundaram H."/>
            <person name="Kingsbury R."/>
            <person name="Harsha H.C."/>
            <person name="Nair B."/>
            <person name="Prasad T.S."/>
            <person name="Chauhan D.S."/>
            <person name="Katoch K."/>
            <person name="Katoch V.M."/>
            <person name="Kumar P."/>
            <person name="Chaerkady R."/>
            <person name="Ramachandran S."/>
            <person name="Dash D."/>
            <person name="Pandey A."/>
        </authorList>
    </citation>
    <scope>IDENTIFICATION BY MASS SPECTROMETRY [LARGE SCALE ANALYSIS]</scope>
    <source>
        <strain>ATCC 25618 / H37Rv</strain>
    </source>
</reference>
<comment type="similarity">
    <text evidence="2">To M.leprae ML0378.</text>
</comment>